<keyword id="KW-0961">Cell wall biogenesis/degradation</keyword>
<keyword id="KW-0963">Cytoplasm</keyword>
<keyword id="KW-0596">Phosphopantetheine</keyword>
<keyword id="KW-0597">Phosphoprotein</keyword>
<keyword id="KW-1185">Reference proteome</keyword>
<dbReference type="EMBL" id="AM946015">
    <property type="protein sequence ID" value="CAR42533.1"/>
    <property type="molecule type" value="Genomic_DNA"/>
</dbReference>
<dbReference type="RefSeq" id="WP_012658634.1">
    <property type="nucleotide sequence ID" value="NC_012004.1"/>
</dbReference>
<dbReference type="SMR" id="B9DSG7"/>
<dbReference type="STRING" id="218495.SUB1147"/>
<dbReference type="GeneID" id="93826426"/>
<dbReference type="KEGG" id="sub:SUB1147"/>
<dbReference type="eggNOG" id="COG0236">
    <property type="taxonomic scope" value="Bacteria"/>
</dbReference>
<dbReference type="HOGENOM" id="CLU_108696_19_0_9"/>
<dbReference type="OrthoDB" id="6462171at2"/>
<dbReference type="UniPathway" id="UPA00556"/>
<dbReference type="Proteomes" id="UP000000449">
    <property type="component" value="Chromosome"/>
</dbReference>
<dbReference type="GO" id="GO:0005737">
    <property type="term" value="C:cytoplasm"/>
    <property type="evidence" value="ECO:0007669"/>
    <property type="project" value="UniProtKB-SubCell"/>
</dbReference>
<dbReference type="GO" id="GO:0036370">
    <property type="term" value="F:D-alanyl carrier activity"/>
    <property type="evidence" value="ECO:0007669"/>
    <property type="project" value="UniProtKB-UniRule"/>
</dbReference>
<dbReference type="GO" id="GO:0071555">
    <property type="term" value="P:cell wall organization"/>
    <property type="evidence" value="ECO:0007669"/>
    <property type="project" value="UniProtKB-KW"/>
</dbReference>
<dbReference type="GO" id="GO:0070395">
    <property type="term" value="P:lipoteichoic acid biosynthetic process"/>
    <property type="evidence" value="ECO:0007669"/>
    <property type="project" value="UniProtKB-UniRule"/>
</dbReference>
<dbReference type="Gene3D" id="1.10.1200.10">
    <property type="entry name" value="ACP-like"/>
    <property type="match status" value="1"/>
</dbReference>
<dbReference type="HAMAP" id="MF_00565">
    <property type="entry name" value="DltC"/>
    <property type="match status" value="1"/>
</dbReference>
<dbReference type="InterPro" id="IPR036736">
    <property type="entry name" value="ACP-like_sf"/>
</dbReference>
<dbReference type="InterPro" id="IPR003230">
    <property type="entry name" value="DltC"/>
</dbReference>
<dbReference type="InterPro" id="IPR009081">
    <property type="entry name" value="PP-bd_ACP"/>
</dbReference>
<dbReference type="NCBIfam" id="TIGR01688">
    <property type="entry name" value="dltC"/>
    <property type="match status" value="1"/>
</dbReference>
<dbReference type="NCBIfam" id="NF003464">
    <property type="entry name" value="PRK05087.1"/>
    <property type="match status" value="1"/>
</dbReference>
<dbReference type="Pfam" id="PF00550">
    <property type="entry name" value="PP-binding"/>
    <property type="match status" value="1"/>
</dbReference>
<dbReference type="SUPFAM" id="SSF47336">
    <property type="entry name" value="ACP-like"/>
    <property type="match status" value="1"/>
</dbReference>
<dbReference type="PROSITE" id="PS50075">
    <property type="entry name" value="CARRIER"/>
    <property type="match status" value="1"/>
</dbReference>
<protein>
    <recommendedName>
        <fullName evidence="1">D-alanyl carrier protein</fullName>
        <shortName evidence="1">DCP</shortName>
    </recommendedName>
    <alternativeName>
        <fullName evidence="1">D-alanine--poly(phosphoribitol) ligase subunit 2</fullName>
    </alternativeName>
</protein>
<name>DLTC_STRU0</name>
<reference key="1">
    <citation type="journal article" date="2009" name="BMC Genomics">
        <title>Evidence for niche adaptation in the genome of the bovine pathogen Streptococcus uberis.</title>
        <authorList>
            <person name="Ward P.N."/>
            <person name="Holden M.T.G."/>
            <person name="Leigh J.A."/>
            <person name="Lennard N."/>
            <person name="Bignell A."/>
            <person name="Barron A."/>
            <person name="Clark L."/>
            <person name="Quail M.A."/>
            <person name="Woodward J."/>
            <person name="Barrell B.G."/>
            <person name="Egan S.A."/>
            <person name="Field T.R."/>
            <person name="Maskell D."/>
            <person name="Kehoe M."/>
            <person name="Dowson C.G."/>
            <person name="Chanter N."/>
            <person name="Whatmore A.M."/>
            <person name="Bentley S.D."/>
            <person name="Parkhill J."/>
        </authorList>
    </citation>
    <scope>NUCLEOTIDE SEQUENCE [LARGE SCALE GENOMIC DNA]</scope>
    <source>
        <strain>ATCC BAA-854 / 0140J</strain>
    </source>
</reference>
<accession>B9DSG7</accession>
<proteinExistence type="inferred from homology"/>
<organism>
    <name type="scientific">Streptococcus uberis (strain ATCC BAA-854 / 0140J)</name>
    <dbReference type="NCBI Taxonomy" id="218495"/>
    <lineage>
        <taxon>Bacteria</taxon>
        <taxon>Bacillati</taxon>
        <taxon>Bacillota</taxon>
        <taxon>Bacilli</taxon>
        <taxon>Lactobacillales</taxon>
        <taxon>Streptococcaceae</taxon>
        <taxon>Streptococcus</taxon>
    </lineage>
</organism>
<comment type="function">
    <text evidence="1">Carrier protein involved in the D-alanylation of lipoteichoic acid (LTA). The loading of thioester-linked D-alanine onto DltC is catalyzed by D-alanine--D-alanyl carrier protein ligase DltA. The DltC-carried D-alanyl group is further transferred to cell membrane phosphatidylglycerol (PG) by forming an ester bond, probably catalyzed by DltD. D-alanylation of LTA plays an important role in modulating the properties of the cell wall in Gram-positive bacteria, influencing the net charge of the cell wall.</text>
</comment>
<comment type="pathway">
    <text evidence="1">Cell wall biogenesis; lipoteichoic acid biosynthesis.</text>
</comment>
<comment type="subcellular location">
    <subcellularLocation>
        <location evidence="1">Cytoplasm</location>
    </subcellularLocation>
</comment>
<comment type="PTM">
    <text evidence="1">4'-phosphopantetheine is transferred from CoA to a specific serine of apo-DCP.</text>
</comment>
<comment type="similarity">
    <text evidence="1">Belongs to the DltC family.</text>
</comment>
<evidence type="ECO:0000255" key="1">
    <source>
        <dbReference type="HAMAP-Rule" id="MF_00565"/>
    </source>
</evidence>
<feature type="chain" id="PRO_1000146799" description="D-alanyl carrier protein">
    <location>
        <begin position="1"/>
        <end position="79"/>
    </location>
</feature>
<feature type="domain" description="Carrier" evidence="1">
    <location>
        <begin position="1"/>
        <end position="77"/>
    </location>
</feature>
<feature type="modified residue" description="O-(pantetheine 4'-phosphoryl)serine" evidence="1">
    <location>
        <position position="35"/>
    </location>
</feature>
<sequence length="79" mass="9018">MTVEEKIIDAFDRLFMEDVSDIKDEDLFDAGVLDSLGTVELIVELENLFEIKVPISEFGREDWNTVNKIVEGVKELQNA</sequence>
<gene>
    <name evidence="1" type="primary">dltC</name>
    <name type="ordered locus">SUB1147</name>
</gene>